<gene>
    <name type="primary">RTT103</name>
    <name type="ordered locus">YDR289C</name>
</gene>
<protein>
    <recommendedName>
        <fullName>Regulator of Ty1 transposition protein 103</fullName>
    </recommendedName>
</protein>
<feature type="chain" id="PRO_0000268707" description="Regulator of Ty1 transposition protein 103">
    <location>
        <begin position="1"/>
        <end position="409"/>
    </location>
</feature>
<feature type="domain" description="CID" evidence="1">
    <location>
        <begin position="1"/>
        <end position="135"/>
    </location>
</feature>
<feature type="region of interest" description="Disordered" evidence="2">
    <location>
        <begin position="250"/>
        <end position="409"/>
    </location>
</feature>
<feature type="compositionally biased region" description="Acidic residues" evidence="2">
    <location>
        <begin position="266"/>
        <end position="289"/>
    </location>
</feature>
<feature type="compositionally biased region" description="Basic and acidic residues" evidence="2">
    <location>
        <begin position="307"/>
        <end position="323"/>
    </location>
</feature>
<feature type="compositionally biased region" description="Basic and acidic residues" evidence="2">
    <location>
        <begin position="337"/>
        <end position="363"/>
    </location>
</feature>
<feature type="compositionally biased region" description="Basic and acidic residues" evidence="2">
    <location>
        <begin position="370"/>
        <end position="380"/>
    </location>
</feature>
<feature type="helix" evidence="8">
    <location>
        <begin position="5"/>
        <end position="13"/>
    </location>
</feature>
<feature type="helix" evidence="8">
    <location>
        <begin position="19"/>
        <end position="30"/>
    </location>
</feature>
<feature type="helix" evidence="8">
    <location>
        <begin position="33"/>
        <end position="35"/>
    </location>
</feature>
<feature type="helix" evidence="8">
    <location>
        <begin position="36"/>
        <end position="47"/>
    </location>
</feature>
<feature type="strand" evidence="8">
    <location>
        <begin position="49"/>
        <end position="52"/>
    </location>
</feature>
<feature type="helix" evidence="8">
    <location>
        <begin position="54"/>
        <end position="71"/>
    </location>
</feature>
<feature type="helix" evidence="8">
    <location>
        <begin position="72"/>
        <end position="74"/>
    </location>
</feature>
<feature type="helix" evidence="8">
    <location>
        <begin position="78"/>
        <end position="85"/>
    </location>
</feature>
<feature type="helix" evidence="8">
    <location>
        <begin position="87"/>
        <end position="97"/>
    </location>
</feature>
<feature type="helix" evidence="8">
    <location>
        <begin position="100"/>
        <end position="116"/>
    </location>
</feature>
<feature type="helix" evidence="8">
    <location>
        <begin position="121"/>
        <end position="131"/>
    </location>
</feature>
<feature type="helix" evidence="9">
    <location>
        <begin position="145"/>
        <end position="177"/>
    </location>
</feature>
<feature type="strand" evidence="9">
    <location>
        <begin position="182"/>
        <end position="184"/>
    </location>
</feature>
<feature type="helix" evidence="9">
    <location>
        <begin position="185"/>
        <end position="246"/>
    </location>
</feature>
<comment type="function">
    <text evidence="3 6">Involved in transcription termination by RNA polymerase II and in regulation of Ty1 transposition.</text>
</comment>
<comment type="subunit">
    <text evidence="6">Interacts with PCF11, RAI1, RAT1, RPO21 and RBP2.</text>
</comment>
<comment type="subcellular location">
    <subcellularLocation>
        <location evidence="4">Nucleus</location>
    </subcellularLocation>
</comment>
<comment type="miscellaneous">
    <text evidence="5">Present with 3930 molecules/cell in log phase SD medium.</text>
</comment>
<comment type="similarity">
    <text evidence="7">Belongs to the UPF0400 (RTT103) family.</text>
</comment>
<accession>Q05543</accession>
<accession>D6VSR9</accession>
<reference key="1">
    <citation type="journal article" date="1997" name="Nature">
        <title>The nucleotide sequence of Saccharomyces cerevisiae chromosome IV.</title>
        <authorList>
            <person name="Jacq C."/>
            <person name="Alt-Moerbe J."/>
            <person name="Andre B."/>
            <person name="Arnold W."/>
            <person name="Bahr A."/>
            <person name="Ballesta J.P.G."/>
            <person name="Bargues M."/>
            <person name="Baron L."/>
            <person name="Becker A."/>
            <person name="Biteau N."/>
            <person name="Bloecker H."/>
            <person name="Blugeon C."/>
            <person name="Boskovic J."/>
            <person name="Brandt P."/>
            <person name="Brueckner M."/>
            <person name="Buitrago M.J."/>
            <person name="Coster F."/>
            <person name="Delaveau T."/>
            <person name="del Rey F."/>
            <person name="Dujon B."/>
            <person name="Eide L.G."/>
            <person name="Garcia-Cantalejo J.M."/>
            <person name="Goffeau A."/>
            <person name="Gomez-Peris A."/>
            <person name="Granotier C."/>
            <person name="Hanemann V."/>
            <person name="Hankeln T."/>
            <person name="Hoheisel J.D."/>
            <person name="Jaeger W."/>
            <person name="Jimenez A."/>
            <person name="Jonniaux J.-L."/>
            <person name="Kraemer C."/>
            <person name="Kuester H."/>
            <person name="Laamanen P."/>
            <person name="Legros Y."/>
            <person name="Louis E.J."/>
            <person name="Moeller-Rieker S."/>
            <person name="Monnet A."/>
            <person name="Moro M."/>
            <person name="Mueller-Auer S."/>
            <person name="Nussbaumer B."/>
            <person name="Paricio N."/>
            <person name="Paulin L."/>
            <person name="Perea J."/>
            <person name="Perez-Alonso M."/>
            <person name="Perez-Ortin J.E."/>
            <person name="Pohl T.M."/>
            <person name="Prydz H."/>
            <person name="Purnelle B."/>
            <person name="Rasmussen S.W."/>
            <person name="Remacha M.A."/>
            <person name="Revuelta J.L."/>
            <person name="Rieger M."/>
            <person name="Salom D."/>
            <person name="Saluz H.P."/>
            <person name="Saiz J.E."/>
            <person name="Saren A.-M."/>
            <person name="Schaefer M."/>
            <person name="Scharfe M."/>
            <person name="Schmidt E.R."/>
            <person name="Schneider C."/>
            <person name="Scholler P."/>
            <person name="Schwarz S."/>
            <person name="Soler-Mira A."/>
            <person name="Urrestarazu L.A."/>
            <person name="Verhasselt P."/>
            <person name="Vissers S."/>
            <person name="Voet M."/>
            <person name="Volckaert G."/>
            <person name="Wagner G."/>
            <person name="Wambutt R."/>
            <person name="Wedler E."/>
            <person name="Wedler H."/>
            <person name="Woelfl S."/>
            <person name="Harris D.E."/>
            <person name="Bowman S."/>
            <person name="Brown D."/>
            <person name="Churcher C.M."/>
            <person name="Connor R."/>
            <person name="Dedman K."/>
            <person name="Gentles S."/>
            <person name="Hamlin N."/>
            <person name="Hunt S."/>
            <person name="Jones L."/>
            <person name="McDonald S."/>
            <person name="Murphy L.D."/>
            <person name="Niblett D."/>
            <person name="Odell C."/>
            <person name="Oliver K."/>
            <person name="Rajandream M.A."/>
            <person name="Richards C."/>
            <person name="Shore L."/>
            <person name="Walsh S.V."/>
            <person name="Barrell B.G."/>
            <person name="Dietrich F.S."/>
            <person name="Mulligan J.T."/>
            <person name="Allen E."/>
            <person name="Araujo R."/>
            <person name="Aviles E."/>
            <person name="Berno A."/>
            <person name="Carpenter J."/>
            <person name="Chen E."/>
            <person name="Cherry J.M."/>
            <person name="Chung E."/>
            <person name="Duncan M."/>
            <person name="Hunicke-Smith S."/>
            <person name="Hyman R.W."/>
            <person name="Komp C."/>
            <person name="Lashkari D."/>
            <person name="Lew H."/>
            <person name="Lin D."/>
            <person name="Mosedale D."/>
            <person name="Nakahara K."/>
            <person name="Namath A."/>
            <person name="Oefner P."/>
            <person name="Oh C."/>
            <person name="Petel F.X."/>
            <person name="Roberts D."/>
            <person name="Schramm S."/>
            <person name="Schroeder M."/>
            <person name="Shogren T."/>
            <person name="Shroff N."/>
            <person name="Winant A."/>
            <person name="Yelton M.A."/>
            <person name="Botstein D."/>
            <person name="Davis R.W."/>
            <person name="Johnston M."/>
            <person name="Andrews S."/>
            <person name="Brinkman R."/>
            <person name="Cooper J."/>
            <person name="Ding H."/>
            <person name="Du Z."/>
            <person name="Favello A."/>
            <person name="Fulton L."/>
            <person name="Gattung S."/>
            <person name="Greco T."/>
            <person name="Hallsworth K."/>
            <person name="Hawkins J."/>
            <person name="Hillier L.W."/>
            <person name="Jier M."/>
            <person name="Johnson D."/>
            <person name="Johnston L."/>
            <person name="Kirsten J."/>
            <person name="Kucaba T."/>
            <person name="Langston Y."/>
            <person name="Latreille P."/>
            <person name="Le T."/>
            <person name="Mardis E."/>
            <person name="Menezes S."/>
            <person name="Miller N."/>
            <person name="Nhan M."/>
            <person name="Pauley A."/>
            <person name="Peluso D."/>
            <person name="Rifkin L."/>
            <person name="Riles L."/>
            <person name="Taich A."/>
            <person name="Trevaskis E."/>
            <person name="Vignati D."/>
            <person name="Wilcox L."/>
            <person name="Wohldman P."/>
            <person name="Vaudin M."/>
            <person name="Wilson R."/>
            <person name="Waterston R."/>
            <person name="Albermann K."/>
            <person name="Hani J."/>
            <person name="Heumann K."/>
            <person name="Kleine K."/>
            <person name="Mewes H.-W."/>
            <person name="Zollner A."/>
            <person name="Zaccaria P."/>
        </authorList>
    </citation>
    <scope>NUCLEOTIDE SEQUENCE [LARGE SCALE GENOMIC DNA]</scope>
    <source>
        <strain>ATCC 204508 / S288c</strain>
    </source>
</reference>
<reference key="2">
    <citation type="journal article" date="2014" name="G3 (Bethesda)">
        <title>The reference genome sequence of Saccharomyces cerevisiae: Then and now.</title>
        <authorList>
            <person name="Engel S.R."/>
            <person name="Dietrich F.S."/>
            <person name="Fisk D.G."/>
            <person name="Binkley G."/>
            <person name="Balakrishnan R."/>
            <person name="Costanzo M.C."/>
            <person name="Dwight S.S."/>
            <person name="Hitz B.C."/>
            <person name="Karra K."/>
            <person name="Nash R.S."/>
            <person name="Weng S."/>
            <person name="Wong E.D."/>
            <person name="Lloyd P."/>
            <person name="Skrzypek M.S."/>
            <person name="Miyasato S.R."/>
            <person name="Simison M."/>
            <person name="Cherry J.M."/>
        </authorList>
    </citation>
    <scope>GENOME REANNOTATION</scope>
    <source>
        <strain>ATCC 204508 / S288c</strain>
    </source>
</reference>
<reference key="3">
    <citation type="journal article" date="2007" name="Genome Res.">
        <title>Approaching a complete repository of sequence-verified protein-encoding clones for Saccharomyces cerevisiae.</title>
        <authorList>
            <person name="Hu Y."/>
            <person name="Rolfs A."/>
            <person name="Bhullar B."/>
            <person name="Murthy T.V.S."/>
            <person name="Zhu C."/>
            <person name="Berger M.F."/>
            <person name="Camargo A.A."/>
            <person name="Kelley F."/>
            <person name="McCarron S."/>
            <person name="Jepson D."/>
            <person name="Richardson A."/>
            <person name="Raphael J."/>
            <person name="Moreira D."/>
            <person name="Taycher E."/>
            <person name="Zuo D."/>
            <person name="Mohr S."/>
            <person name="Kane M.F."/>
            <person name="Williamson J."/>
            <person name="Simpson A.J.G."/>
            <person name="Bulyk M.L."/>
            <person name="Harlow E."/>
            <person name="Marsischky G."/>
            <person name="Kolodner R.D."/>
            <person name="LaBaer J."/>
        </authorList>
    </citation>
    <scope>NUCLEOTIDE SEQUENCE [GENOMIC DNA]</scope>
    <source>
        <strain>ATCC 204508 / S288c</strain>
    </source>
</reference>
<reference key="4">
    <citation type="journal article" date="2001" name="Genetics">
        <title>Multiple regulators of Ty1 transposition in Saccharomyces cerevisiae have conserved roles in genome maintenance.</title>
        <authorList>
            <person name="Scholes D.T."/>
            <person name="Banerjee M."/>
            <person name="Bowen B."/>
            <person name="Curcio M.J."/>
        </authorList>
    </citation>
    <scope>FUNCTION</scope>
</reference>
<reference key="5">
    <citation type="journal article" date="2003" name="Nature">
        <title>Global analysis of protein localization in budding yeast.</title>
        <authorList>
            <person name="Huh W.-K."/>
            <person name="Falvo J.V."/>
            <person name="Gerke L.C."/>
            <person name="Carroll A.S."/>
            <person name="Howson R.W."/>
            <person name="Weissman J.S."/>
            <person name="O'Shea E.K."/>
        </authorList>
    </citation>
    <scope>SUBCELLULAR LOCATION [LARGE SCALE ANALYSIS]</scope>
</reference>
<reference key="6">
    <citation type="journal article" date="2003" name="Nature">
        <title>Global analysis of protein expression in yeast.</title>
        <authorList>
            <person name="Ghaemmaghami S."/>
            <person name="Huh W.-K."/>
            <person name="Bower K."/>
            <person name="Howson R.W."/>
            <person name="Belle A."/>
            <person name="Dephoure N."/>
            <person name="O'Shea E.K."/>
            <person name="Weissman J.S."/>
        </authorList>
    </citation>
    <scope>LEVEL OF PROTEIN EXPRESSION [LARGE SCALE ANALYSIS]</scope>
</reference>
<reference key="7">
    <citation type="journal article" date="2004" name="Nature">
        <title>The yeast Rat1 exonuclease promotes transcription termination by RNA polymerase II.</title>
        <authorList>
            <person name="Kim M."/>
            <person name="Krogan N.J."/>
            <person name="Vasiljeva L."/>
            <person name="Rando O.J."/>
            <person name="Nedea E."/>
            <person name="Greenblatt J.F."/>
            <person name="Buratowski S."/>
        </authorList>
    </citation>
    <scope>FUNCTION</scope>
    <scope>INTERACTION WITH PCF11; RAI1; RAT1; RPO21 AND RBP2</scope>
</reference>
<reference key="8">
    <citation type="journal article" date="2008" name="Mol. Cell. Proteomics">
        <title>A multidimensional chromatography technology for in-depth phosphoproteome analysis.</title>
        <authorList>
            <person name="Albuquerque C.P."/>
            <person name="Smolka M.B."/>
            <person name="Payne S.H."/>
            <person name="Bafna V."/>
            <person name="Eng J."/>
            <person name="Zhou H."/>
        </authorList>
    </citation>
    <scope>IDENTIFICATION BY MASS SPECTROMETRY [LARGE SCALE ANALYSIS]</scope>
</reference>
<sequence>MPFSSEQFTTKLNTLEDSQESISSASKWLLLQYRDAPKVAEMWKEYMLRPSVNTRRKLLGLYLMNHVVQQAKGQKIIQFQDSFGKVAAEVLGRINQEFPRDLKKKLSRVVNILKERNIFSKQVVNDIERSLKTESSPVEALVLPQKLKDFAKDYEKLVKMHHNVCAMKMRFDKSSDELDPSSSVYEENFKTISKIGNMAKDIINESILKRESGIHKLQSTLDDEKRHLDEEQNMLSEIEFVLSAKDPSRLNKNVDEDNIIPTYEVGDGDDDDDDGDNDDDDDDDDDDKNYDDRSNDSNYGVTNISTTDKKNEVVEKTDSEHKNSTHNPSDNQFGMKRTHDMIGHDDANDIPEKKVHLDSKTSEDGTFNSEDGHYELDIEGHVGAQTDEGVENSGGVSSSIQDLLSKLAN</sequence>
<evidence type="ECO:0000255" key="1">
    <source>
        <dbReference type="PROSITE-ProRule" id="PRU00724"/>
    </source>
</evidence>
<evidence type="ECO:0000256" key="2">
    <source>
        <dbReference type="SAM" id="MobiDB-lite"/>
    </source>
</evidence>
<evidence type="ECO:0000269" key="3">
    <source>
    </source>
</evidence>
<evidence type="ECO:0000269" key="4">
    <source>
    </source>
</evidence>
<evidence type="ECO:0000269" key="5">
    <source>
    </source>
</evidence>
<evidence type="ECO:0000269" key="6">
    <source>
    </source>
</evidence>
<evidence type="ECO:0000305" key="7"/>
<evidence type="ECO:0007829" key="8">
    <source>
        <dbReference type="PDB" id="2KM4"/>
    </source>
</evidence>
<evidence type="ECO:0007829" key="9">
    <source>
        <dbReference type="PDB" id="5M48"/>
    </source>
</evidence>
<organism>
    <name type="scientific">Saccharomyces cerevisiae (strain ATCC 204508 / S288c)</name>
    <name type="common">Baker's yeast</name>
    <dbReference type="NCBI Taxonomy" id="559292"/>
    <lineage>
        <taxon>Eukaryota</taxon>
        <taxon>Fungi</taxon>
        <taxon>Dikarya</taxon>
        <taxon>Ascomycota</taxon>
        <taxon>Saccharomycotina</taxon>
        <taxon>Saccharomycetes</taxon>
        <taxon>Saccharomycetales</taxon>
        <taxon>Saccharomycetaceae</taxon>
        <taxon>Saccharomyces</taxon>
    </lineage>
</organism>
<dbReference type="EMBL" id="U51031">
    <property type="protein sequence ID" value="AAB64467.1"/>
    <property type="molecule type" value="Genomic_DNA"/>
</dbReference>
<dbReference type="EMBL" id="AY557793">
    <property type="protein sequence ID" value="AAS56119.1"/>
    <property type="molecule type" value="Genomic_DNA"/>
</dbReference>
<dbReference type="EMBL" id="BK006938">
    <property type="protein sequence ID" value="DAA12129.1"/>
    <property type="molecule type" value="Genomic_DNA"/>
</dbReference>
<dbReference type="PIR" id="S70119">
    <property type="entry name" value="S70119"/>
</dbReference>
<dbReference type="RefSeq" id="NP_010575.1">
    <property type="nucleotide sequence ID" value="NM_001180597.1"/>
</dbReference>
<dbReference type="PDB" id="2KM4">
    <property type="method" value="NMR"/>
    <property type="chains" value="A=1-131"/>
</dbReference>
<dbReference type="PDB" id="2L0I">
    <property type="method" value="NMR"/>
    <property type="chains" value="A=3-131"/>
</dbReference>
<dbReference type="PDB" id="5M48">
    <property type="method" value="X-ray"/>
    <property type="resolution" value="2.59 A"/>
    <property type="chains" value="A=141-246"/>
</dbReference>
<dbReference type="PDB" id="5WOZ">
    <property type="method" value="NMR"/>
    <property type="chains" value="A=5-131"/>
</dbReference>
<dbReference type="PDB" id="9FMS">
    <property type="method" value="EM"/>
    <property type="resolution" value="2.65 A"/>
    <property type="chains" value="D=252-273"/>
</dbReference>
<dbReference type="PDBsum" id="2KM4"/>
<dbReference type="PDBsum" id="2L0I"/>
<dbReference type="PDBsum" id="5M48"/>
<dbReference type="PDBsum" id="5WOZ"/>
<dbReference type="PDBsum" id="9FMS"/>
<dbReference type="BMRB" id="Q05543"/>
<dbReference type="EMDB" id="EMD-50566"/>
<dbReference type="SASBDB" id="Q05543"/>
<dbReference type="SMR" id="Q05543"/>
<dbReference type="BioGRID" id="32342">
    <property type="interactions" value="538"/>
</dbReference>
<dbReference type="DIP" id="DIP-2583N"/>
<dbReference type="FunCoup" id="Q05543">
    <property type="interactions" value="69"/>
</dbReference>
<dbReference type="IntAct" id="Q05543">
    <property type="interactions" value="7"/>
</dbReference>
<dbReference type="MINT" id="Q05543"/>
<dbReference type="STRING" id="4932.YDR289C"/>
<dbReference type="iPTMnet" id="Q05543"/>
<dbReference type="PaxDb" id="4932-YDR289C"/>
<dbReference type="PeptideAtlas" id="Q05543"/>
<dbReference type="EnsemblFungi" id="YDR289C_mRNA">
    <property type="protein sequence ID" value="YDR289C"/>
    <property type="gene ID" value="YDR289C"/>
</dbReference>
<dbReference type="GeneID" id="851884"/>
<dbReference type="KEGG" id="sce:YDR289C"/>
<dbReference type="AGR" id="SGD:S000002697"/>
<dbReference type="SGD" id="S000002697">
    <property type="gene designation" value="RTT103"/>
</dbReference>
<dbReference type="VEuPathDB" id="FungiDB:YDR289C"/>
<dbReference type="eggNOG" id="KOG2669">
    <property type="taxonomic scope" value="Eukaryota"/>
</dbReference>
<dbReference type="GeneTree" id="ENSGT00950000183094"/>
<dbReference type="HOGENOM" id="CLU_053395_0_0_1"/>
<dbReference type="InParanoid" id="Q05543"/>
<dbReference type="OMA" id="HYELDIE"/>
<dbReference type="OrthoDB" id="10069473at2759"/>
<dbReference type="BioCyc" id="YEAST:G3O-29853-MONOMER"/>
<dbReference type="Reactome" id="R-SCE-6807505">
    <property type="pathway name" value="RNA polymerase II transcribes snRNA genes"/>
</dbReference>
<dbReference type="BioGRID-ORCS" id="851884">
    <property type="hits" value="0 hits in 10 CRISPR screens"/>
</dbReference>
<dbReference type="EvolutionaryTrace" id="Q05543"/>
<dbReference type="PRO" id="PR:Q05543"/>
<dbReference type="Proteomes" id="UP000002311">
    <property type="component" value="Chromosome IV"/>
</dbReference>
<dbReference type="RNAct" id="Q05543">
    <property type="molecule type" value="protein"/>
</dbReference>
<dbReference type="GO" id="GO:0000785">
    <property type="term" value="C:chromatin"/>
    <property type="evidence" value="ECO:0000314"/>
    <property type="project" value="SGD"/>
</dbReference>
<dbReference type="GO" id="GO:0005634">
    <property type="term" value="C:nucleus"/>
    <property type="evidence" value="ECO:0007669"/>
    <property type="project" value="UniProtKB-SubCell"/>
</dbReference>
<dbReference type="GO" id="GO:0035861">
    <property type="term" value="C:site of double-strand break"/>
    <property type="evidence" value="ECO:0000314"/>
    <property type="project" value="SGD"/>
</dbReference>
<dbReference type="GO" id="GO:0003677">
    <property type="term" value="F:DNA binding"/>
    <property type="evidence" value="ECO:0007669"/>
    <property type="project" value="UniProtKB-KW"/>
</dbReference>
<dbReference type="GO" id="GO:1990269">
    <property type="term" value="F:RNA polymerase II C-terminal domain phosphoserine binding"/>
    <property type="evidence" value="ECO:0000314"/>
    <property type="project" value="SGD"/>
</dbReference>
<dbReference type="GO" id="GO:0000993">
    <property type="term" value="F:RNA polymerase II complex binding"/>
    <property type="evidence" value="ECO:0000318"/>
    <property type="project" value="GO_Central"/>
</dbReference>
<dbReference type="GO" id="GO:0031124">
    <property type="term" value="P:mRNA 3'-end processing"/>
    <property type="evidence" value="ECO:0000315"/>
    <property type="project" value="SGD"/>
</dbReference>
<dbReference type="GO" id="GO:0010526">
    <property type="term" value="P:transposable element silencing"/>
    <property type="evidence" value="ECO:0000315"/>
    <property type="project" value="SGD"/>
</dbReference>
<dbReference type="CDD" id="cd17003">
    <property type="entry name" value="CID_Rtt103"/>
    <property type="match status" value="1"/>
</dbReference>
<dbReference type="FunFam" id="1.25.40.90:FF:000041">
    <property type="entry name" value="Regulator of Ty1 transposition"/>
    <property type="match status" value="1"/>
</dbReference>
<dbReference type="Gene3D" id="1.25.40.90">
    <property type="match status" value="1"/>
</dbReference>
<dbReference type="InterPro" id="IPR006569">
    <property type="entry name" value="CID_dom"/>
</dbReference>
<dbReference type="InterPro" id="IPR008942">
    <property type="entry name" value="ENTH_VHS"/>
</dbReference>
<dbReference type="InterPro" id="IPR047883">
    <property type="entry name" value="Rtt103-like_CID"/>
</dbReference>
<dbReference type="PANTHER" id="PTHR12460:SF0">
    <property type="entry name" value="CID DOMAIN-CONTAINING PROTEIN-RELATED"/>
    <property type="match status" value="1"/>
</dbReference>
<dbReference type="PANTHER" id="PTHR12460">
    <property type="entry name" value="CYCLIN-DEPENDENT KINASE INHIBITOR-RELATED PROTEIN"/>
    <property type="match status" value="1"/>
</dbReference>
<dbReference type="Pfam" id="PF04818">
    <property type="entry name" value="CID"/>
    <property type="match status" value="1"/>
</dbReference>
<dbReference type="SMART" id="SM00582">
    <property type="entry name" value="RPR"/>
    <property type="match status" value="1"/>
</dbReference>
<dbReference type="SUPFAM" id="SSF48464">
    <property type="entry name" value="ENTH/VHS domain"/>
    <property type="match status" value="1"/>
</dbReference>
<dbReference type="PROSITE" id="PS51391">
    <property type="entry name" value="CID"/>
    <property type="match status" value="1"/>
</dbReference>
<keyword id="KW-0002">3D-structure</keyword>
<keyword id="KW-0238">DNA-binding</keyword>
<keyword id="KW-0539">Nucleus</keyword>
<keyword id="KW-1185">Reference proteome</keyword>
<keyword id="KW-0804">Transcription</keyword>
<keyword id="KW-0805">Transcription regulation</keyword>
<proteinExistence type="evidence at protein level"/>
<name>RT103_YEAST</name>